<name>HEMA_I85A3</name>
<comment type="function">
    <text>Binds to sialic acid-containing receptors on the cell surface, bringing about the attachment of the virus particle to the cell. This attachment induces virion internalization of about two third of the virus particles through clathrin-dependent endocytosis and about one third through a clathrin- and caveolin-independent pathway. Plays a major role in the determination of host range restriction and virulence. Class I viral fusion protein. Responsible for penetration of the virus into the cell cytoplasm by mediating the fusion of the membrane of the endocytosed virus particle with the endosomal membrane. Low pH in endosomes induces an irreversible conformational change in HA2, releasing the fusion hydrophobic peptide. Several trimers are required to form a competent fusion pore.</text>
</comment>
<comment type="function">
    <text evidence="1">Binds to sialic acid-containing receptors on the cell surface, bringing about the attachment of the virus particle to the cell. This attachment induces virion internalization either through clathrin-dependent endocytosis or through clathrin- and caveolin-independent pathway. Plays a major role in the determination of host range restriction and virulence. Class I viral fusion protein. Responsible for penetration of the virus into the cell cytoplasm by mediating the fusion of the membrane of the endocytosed virus particle with the endosomal membrane. Low pH in endosomes induces an irreversible conformational change in HA2, releasing the fusion hydrophobic peptide. Several trimers are required to form a competent fusion pore.</text>
</comment>
<comment type="subunit">
    <text evidence="1">Homotrimer of disulfide-linked HA1-HA2.</text>
</comment>
<comment type="subcellular location">
    <subcellularLocation>
        <location evidence="1">Virion membrane</location>
        <topology evidence="1">Single-pass type I membrane protein</topology>
    </subcellularLocation>
    <subcellularLocation>
        <location evidence="1">Host apical cell membrane</location>
        <topology evidence="1">Single-pass type I membrane protein</topology>
    </subcellularLocation>
    <text evidence="1">Targeted to the apical plasma membrane in epithelial polarized cells through a signal present in the transmembrane domain. Associated with glycosphingolipid- and cholesterol-enriched detergent-resistant lipid rafts.</text>
</comment>
<comment type="PTM">
    <text evidence="1">Palmitoylated.</text>
</comment>
<comment type="PTM">
    <text evidence="1">In natural infection, inactive HA is matured into HA1 and HA2 outside the cell by one or more trypsin-like, arginine-specific endoprotease secreted by the bronchial epithelial cells. One identified protease that may be involved in this process is secreted in lungs by club cells.</text>
</comment>
<comment type="miscellaneous">
    <text>Major glycoprotein, comprises over 80% of the envelope proteins present in virus particle.</text>
</comment>
<comment type="miscellaneous">
    <text>The extent of infection into host organism is determined by HA. Influenza viruses bud from the apical surface of polarized epithelial cells (e.g. bronchial epithelial cells) into lumen of lungs and are therefore usually pneumotropic. The reason is that HA is cleaved by tryptase clara which is restricted to lungs. However, HAs of H5 and H7 pantropic avian viruses subtypes can be cleaved by furin and subtilisin-type enzymes, allowing the virus to grow in other organs than lungs.</text>
</comment>
<comment type="miscellaneous">
    <text evidence="2">The influenza A genome consist of 8 RNA segments. Genetic variation of hemagglutinin and/or neuraminidase genes results in the emergence of new influenza strains. The mechanism of variation can be the result of point mutations or the result of genetic reassortment between segments of two different strains.</text>
</comment>
<comment type="similarity">
    <text evidence="1">Belongs to the influenza viruses hemagglutinin family.</text>
</comment>
<accession>P09343</accession>
<reference key="1">
    <citation type="journal article" date="1987" name="Virology">
        <title>Molecular analysis of the hemagglutinin genes of Australian H7N7 influenza viruses: role of passerine birds in maintenance or transmission?</title>
        <authorList>
            <person name="Nestorowicz A."/>
            <person name="Kawaoka Y."/>
            <person name="Bean W.J."/>
            <person name="Webster R.G."/>
        </authorList>
    </citation>
    <scope>NUCLEOTIDE SEQUENCE [GENOMIC RNA]</scope>
</reference>
<gene>
    <name evidence="1" type="primary">HA</name>
</gene>
<sequence>MNTQILILTLVAAIHTNADKICLGHHAVSNGTKVNTLTERGVEVVNATETVERRTIPRICTKGKKAIDLGQCGLLGIITGPPQCDQFLEFTADLIIERREGNDVCYPGKFVNEEALRQILRESGGINKETTGFTYSGIRTNGVTSACRRLGSSFYAEMKWLLSNTDNAAFPQMTKSYKNTRNEPALIVWGIHHSGSATEQTKLYGSGNKLITVGSSNYQQSFVPSPGARPQVNGQSGRIDFHWLILNPNDTVTFSFNGAFVAPDRVSFFKGKSMGIQSEVPVDTNCEGECYHNGGTITSNLPFQNVNSRAVGKCPRYVKQKSLLLATGMKNVPEIPKKREKRGLFGAIAGFIENGWEGLVDGWYGFRHQNAQGEGTAADYKSTQSAIDQITGKLNRLIEKTNQQFELIDNEFTEVEKQIGNVINWTRDSITEVWSYNADLLVAMENQHTIDLADSEMNKLYERVRRQLRENAEEDCTGCFEIFHKCDDDCMASIRNNTYDHSTYREEAMQNRVKIDPVKLSSGYKDVILWFSLGASCFLLLAIAMGLVFMCVKNGNMRCTICI</sequence>
<protein>
    <recommendedName>
        <fullName evidence="1">Hemagglutinin</fullName>
    </recommendedName>
    <component>
        <recommendedName>
            <fullName evidence="1">Hemagglutinin HA1 chain</fullName>
        </recommendedName>
    </component>
    <component>
        <recommendedName>
            <fullName evidence="1">Hemagglutinin HA2 chain</fullName>
        </recommendedName>
    </component>
</protein>
<organismHost>
    <name type="scientific">Aves</name>
    <dbReference type="NCBI Taxonomy" id="8782"/>
</organismHost>
<organismHost>
    <name type="scientific">Equus caballus</name>
    <name type="common">Horse</name>
    <dbReference type="NCBI Taxonomy" id="9796"/>
</organismHost>
<organismHost>
    <name type="scientific">Homo sapiens</name>
    <name type="common">Human</name>
    <dbReference type="NCBI Taxonomy" id="9606"/>
</organismHost>
<organismHost>
    <name type="scientific">Phocidae</name>
    <name type="common">true seals</name>
    <dbReference type="NCBI Taxonomy" id="9709"/>
</organismHost>
<organism>
    <name type="scientific">Influenza A virus (strain A/Chicken/Victoria/1/1985 H7N7)</name>
    <dbReference type="NCBI Taxonomy" id="402520"/>
    <lineage>
        <taxon>Viruses</taxon>
        <taxon>Riboviria</taxon>
        <taxon>Orthornavirae</taxon>
        <taxon>Negarnaviricota</taxon>
        <taxon>Polyploviricotina</taxon>
        <taxon>Insthoviricetes</taxon>
        <taxon>Articulavirales</taxon>
        <taxon>Orthomyxoviridae</taxon>
        <taxon>Alphainfluenzavirus</taxon>
        <taxon>Alphainfluenzavirus influenzae</taxon>
        <taxon>Influenza A virus</taxon>
    </lineage>
</organism>
<keyword id="KW-1167">Clathrin- and caveolin-independent endocytosis of virus by host</keyword>
<keyword id="KW-1165">Clathrin-mediated endocytosis of virus by host</keyword>
<keyword id="KW-1015">Disulfide bond</keyword>
<keyword id="KW-1170">Fusion of virus membrane with host endosomal membrane</keyword>
<keyword id="KW-1168">Fusion of virus membrane with host membrane</keyword>
<keyword id="KW-0325">Glycoprotein</keyword>
<keyword id="KW-0348">Hemagglutinin</keyword>
<keyword id="KW-1032">Host cell membrane</keyword>
<keyword id="KW-1043">Host membrane</keyword>
<keyword id="KW-0945">Host-virus interaction</keyword>
<keyword id="KW-0449">Lipoprotein</keyword>
<keyword id="KW-0472">Membrane</keyword>
<keyword id="KW-0564">Palmitate</keyword>
<keyword id="KW-0732">Signal</keyword>
<keyword id="KW-0812">Transmembrane</keyword>
<keyword id="KW-1133">Transmembrane helix</keyword>
<keyword id="KW-1161">Viral attachment to host cell</keyword>
<keyword id="KW-0261">Viral envelope protein</keyword>
<keyword id="KW-1162">Viral penetration into host cytoplasm</keyword>
<keyword id="KW-0946">Virion</keyword>
<keyword id="KW-1164">Virus endocytosis by host</keyword>
<keyword id="KW-1160">Virus entry into host cell</keyword>
<feature type="signal peptide" evidence="1">
    <location>
        <begin position="1"/>
        <end position="18"/>
    </location>
</feature>
<feature type="chain" id="PRO_0000440512" description="Hemagglutinin" evidence="1">
    <location>
        <begin position="19"/>
        <end position="563"/>
    </location>
</feature>
<feature type="chain" id="PRO_0000440513" description="Hemagglutinin HA1 chain" evidence="1">
    <location>
        <begin position="19"/>
        <end position="341"/>
    </location>
</feature>
<feature type="chain" id="PRO_0000038903" description="Hemagglutinin HA2 chain" evidence="1">
    <location>
        <begin position="343"/>
        <end position="563"/>
    </location>
</feature>
<feature type="topological domain" description="Extracellular" evidence="1">
    <location>
        <begin position="19"/>
        <end position="526"/>
    </location>
</feature>
<feature type="transmembrane region" description="Helical" evidence="1">
    <location>
        <begin position="527"/>
        <end position="547"/>
    </location>
</feature>
<feature type="topological domain" description="Cytoplasmic" evidence="1">
    <location>
        <begin position="548"/>
        <end position="563"/>
    </location>
</feature>
<feature type="site" description="Cleavage; by host" evidence="1">
    <location>
        <begin position="342"/>
        <end position="343"/>
    </location>
</feature>
<feature type="lipid moiety-binding region" description="S-palmitoyl cysteine; by host" evidence="1">
    <location>
        <position position="559"/>
    </location>
</feature>
<feature type="lipid moiety-binding region" description="S-palmitoyl cysteine; by host" evidence="1">
    <location>
        <position position="562"/>
    </location>
</feature>
<feature type="glycosylation site" description="N-linked (GlcNAc...) asparagine; by host" evidence="1">
    <location>
        <position position="30"/>
    </location>
</feature>
<feature type="glycosylation site" description="N-linked (GlcNAc...) asparagine; by host" evidence="1">
    <location>
        <position position="46"/>
    </location>
</feature>
<feature type="glycosylation site" description="N-linked (GlcNAc...) asparagine; by host" evidence="1">
    <location>
        <position position="249"/>
    </location>
</feature>
<feature type="glycosylation site" description="N-linked (GlcNAc...) asparagine; by host" evidence="1">
    <location>
        <position position="424"/>
    </location>
</feature>
<feature type="glycosylation site" description="N-linked (GlcNAc...) asparagine; by host" evidence="1">
    <location>
        <position position="496"/>
    </location>
</feature>
<feature type="disulfide bond" description="Interchain (between HA1 and HA2 chains)" evidence="1">
    <location>
        <begin position="22"/>
        <end position="479"/>
    </location>
</feature>
<feature type="disulfide bond" evidence="1">
    <location>
        <begin position="60"/>
        <end position="286"/>
    </location>
</feature>
<feature type="disulfide bond" evidence="1">
    <location>
        <begin position="72"/>
        <end position="84"/>
    </location>
</feature>
<feature type="disulfide bond" evidence="1">
    <location>
        <begin position="105"/>
        <end position="147"/>
    </location>
</feature>
<feature type="disulfide bond" evidence="1">
    <location>
        <begin position="290"/>
        <end position="314"/>
    </location>
</feature>
<feature type="disulfide bond" evidence="1">
    <location>
        <begin position="486"/>
        <end position="490"/>
    </location>
</feature>
<dbReference type="EMBL" id="M17735">
    <property type="protein sequence ID" value="AAA43152.1"/>
    <property type="molecule type" value="Genomic_RNA"/>
</dbReference>
<dbReference type="SMR" id="P09343"/>
<dbReference type="GlyCosmos" id="P09343">
    <property type="glycosylation" value="5 sites, No reported glycans"/>
</dbReference>
<dbReference type="GO" id="GO:0020002">
    <property type="term" value="C:host cell plasma membrane"/>
    <property type="evidence" value="ECO:0007669"/>
    <property type="project" value="UniProtKB-SubCell"/>
</dbReference>
<dbReference type="GO" id="GO:0016020">
    <property type="term" value="C:membrane"/>
    <property type="evidence" value="ECO:0007669"/>
    <property type="project" value="UniProtKB-UniRule"/>
</dbReference>
<dbReference type="GO" id="GO:0019031">
    <property type="term" value="C:viral envelope"/>
    <property type="evidence" value="ECO:0007669"/>
    <property type="project" value="UniProtKB-UniRule"/>
</dbReference>
<dbReference type="GO" id="GO:0055036">
    <property type="term" value="C:virion membrane"/>
    <property type="evidence" value="ECO:0007669"/>
    <property type="project" value="UniProtKB-SubCell"/>
</dbReference>
<dbReference type="GO" id="GO:0046789">
    <property type="term" value="F:host cell surface receptor binding"/>
    <property type="evidence" value="ECO:0007669"/>
    <property type="project" value="UniProtKB-UniRule"/>
</dbReference>
<dbReference type="GO" id="GO:0075512">
    <property type="term" value="P:clathrin-dependent endocytosis of virus by host cell"/>
    <property type="evidence" value="ECO:0007669"/>
    <property type="project" value="UniProtKB-UniRule"/>
</dbReference>
<dbReference type="GO" id="GO:0039654">
    <property type="term" value="P:fusion of virus membrane with host endosome membrane"/>
    <property type="evidence" value="ECO:0007669"/>
    <property type="project" value="UniProtKB-UniRule"/>
</dbReference>
<dbReference type="GO" id="GO:0019064">
    <property type="term" value="P:fusion of virus membrane with host plasma membrane"/>
    <property type="evidence" value="ECO:0007669"/>
    <property type="project" value="InterPro"/>
</dbReference>
<dbReference type="GO" id="GO:0046761">
    <property type="term" value="P:viral budding from plasma membrane"/>
    <property type="evidence" value="ECO:0007669"/>
    <property type="project" value="UniProtKB-UniRule"/>
</dbReference>
<dbReference type="GO" id="GO:0019062">
    <property type="term" value="P:virion attachment to host cell"/>
    <property type="evidence" value="ECO:0007669"/>
    <property type="project" value="UniProtKB-KW"/>
</dbReference>
<dbReference type="Gene3D" id="3.90.20.10">
    <property type="match status" value="1"/>
</dbReference>
<dbReference type="Gene3D" id="3.90.209.20">
    <property type="match status" value="1"/>
</dbReference>
<dbReference type="HAMAP" id="MF_04072">
    <property type="entry name" value="INFV_HEMA"/>
    <property type="match status" value="1"/>
</dbReference>
<dbReference type="InterPro" id="IPR008980">
    <property type="entry name" value="Capsid_hemagglutn"/>
</dbReference>
<dbReference type="InterPro" id="IPR013828">
    <property type="entry name" value="Hemagglutn_HA1_a/b_dom_sf"/>
</dbReference>
<dbReference type="InterPro" id="IPR000149">
    <property type="entry name" value="Hemagglutn_influenz_A"/>
</dbReference>
<dbReference type="InterPro" id="IPR001364">
    <property type="entry name" value="Hemagglutn_influenz_A/B"/>
</dbReference>
<dbReference type="Pfam" id="PF00509">
    <property type="entry name" value="Hemagglutinin"/>
    <property type="match status" value="1"/>
</dbReference>
<dbReference type="PRINTS" id="PR00330">
    <property type="entry name" value="HEMAGGLUTN1"/>
</dbReference>
<dbReference type="PRINTS" id="PR00329">
    <property type="entry name" value="HEMAGGLUTN12"/>
</dbReference>
<dbReference type="SUPFAM" id="SSF58064">
    <property type="entry name" value="Influenza hemagglutinin (stalk)"/>
    <property type="match status" value="1"/>
</dbReference>
<dbReference type="SUPFAM" id="SSF49818">
    <property type="entry name" value="Viral protein domain"/>
    <property type="match status" value="1"/>
</dbReference>
<proteinExistence type="inferred from homology"/>
<evidence type="ECO:0000255" key="1">
    <source>
        <dbReference type="HAMAP-Rule" id="MF_04072"/>
    </source>
</evidence>
<evidence type="ECO:0000305" key="2"/>